<feature type="chain" id="PRO_1000135730" description="3-isopropylmalate dehydratase large subunit">
    <location>
        <begin position="1"/>
        <end position="418"/>
    </location>
</feature>
<feature type="binding site" evidence="1">
    <location>
        <position position="299"/>
    </location>
    <ligand>
        <name>[4Fe-4S] cluster</name>
        <dbReference type="ChEBI" id="CHEBI:49883"/>
    </ligand>
</feature>
<feature type="binding site" evidence="1">
    <location>
        <position position="359"/>
    </location>
    <ligand>
        <name>[4Fe-4S] cluster</name>
        <dbReference type="ChEBI" id="CHEBI:49883"/>
    </ligand>
</feature>
<feature type="binding site" evidence="1">
    <location>
        <position position="362"/>
    </location>
    <ligand>
        <name>[4Fe-4S] cluster</name>
        <dbReference type="ChEBI" id="CHEBI:49883"/>
    </ligand>
</feature>
<comment type="function">
    <text evidence="1">Catalyzes the isomerization between 2-isopropylmalate and 3-isopropylmalate, via the formation of 2-isopropylmaleate.</text>
</comment>
<comment type="catalytic activity">
    <reaction evidence="1">
        <text>(2R,3S)-3-isopropylmalate = (2S)-2-isopropylmalate</text>
        <dbReference type="Rhea" id="RHEA:32287"/>
        <dbReference type="ChEBI" id="CHEBI:1178"/>
        <dbReference type="ChEBI" id="CHEBI:35121"/>
        <dbReference type="EC" id="4.2.1.33"/>
    </reaction>
</comment>
<comment type="cofactor">
    <cofactor evidence="1">
        <name>[4Fe-4S] cluster</name>
        <dbReference type="ChEBI" id="CHEBI:49883"/>
    </cofactor>
    <text evidence="1">Binds 1 [4Fe-4S] cluster per subunit.</text>
</comment>
<comment type="pathway">
    <text evidence="1">Amino-acid biosynthesis; L-leucine biosynthesis; L-leucine from 3-methyl-2-oxobutanoate: step 2/4.</text>
</comment>
<comment type="subunit">
    <text evidence="1">Heterodimer of LeuC and LeuD.</text>
</comment>
<comment type="similarity">
    <text evidence="1">Belongs to the aconitase/IPM isomerase family. LeuC type 2 subfamily.</text>
</comment>
<proteinExistence type="inferred from homology"/>
<name>LEUC_NITV9</name>
<reference key="1">
    <citation type="submission" date="2008-10" db="EMBL/GenBank/DDBJ databases">
        <title>Complete sequence of Desulfovibrio vulgaris str. 'Miyazaki F'.</title>
        <authorList>
            <person name="Lucas S."/>
            <person name="Copeland A."/>
            <person name="Lapidus A."/>
            <person name="Glavina del Rio T."/>
            <person name="Dalin E."/>
            <person name="Tice H."/>
            <person name="Bruce D."/>
            <person name="Goodwin L."/>
            <person name="Pitluck S."/>
            <person name="Sims D."/>
            <person name="Brettin T."/>
            <person name="Detter J.C."/>
            <person name="Han C."/>
            <person name="Larimer F."/>
            <person name="Land M."/>
            <person name="Hauser L."/>
            <person name="Kyrpides N."/>
            <person name="Mikhailova N."/>
            <person name="Hazen T.C."/>
            <person name="Richardson P."/>
        </authorList>
    </citation>
    <scope>NUCLEOTIDE SEQUENCE [LARGE SCALE GENOMIC DNA]</scope>
    <source>
        <strain>DSM 19637 / Miyazaki F</strain>
    </source>
</reference>
<dbReference type="EC" id="4.2.1.33" evidence="1"/>
<dbReference type="EMBL" id="CP001197">
    <property type="protein sequence ID" value="ACL08736.1"/>
    <property type="molecule type" value="Genomic_DNA"/>
</dbReference>
<dbReference type="SMR" id="B8DM92"/>
<dbReference type="STRING" id="883.DvMF_1792"/>
<dbReference type="KEGG" id="dvm:DvMF_1792"/>
<dbReference type="eggNOG" id="COG0065">
    <property type="taxonomic scope" value="Bacteria"/>
</dbReference>
<dbReference type="HOGENOM" id="CLU_006714_3_4_7"/>
<dbReference type="OrthoDB" id="9764318at2"/>
<dbReference type="UniPathway" id="UPA00048">
    <property type="reaction ID" value="UER00071"/>
</dbReference>
<dbReference type="GO" id="GO:0003861">
    <property type="term" value="F:3-isopropylmalate dehydratase activity"/>
    <property type="evidence" value="ECO:0007669"/>
    <property type="project" value="UniProtKB-UniRule"/>
</dbReference>
<dbReference type="GO" id="GO:0051539">
    <property type="term" value="F:4 iron, 4 sulfur cluster binding"/>
    <property type="evidence" value="ECO:0007669"/>
    <property type="project" value="UniProtKB-KW"/>
</dbReference>
<dbReference type="GO" id="GO:0046872">
    <property type="term" value="F:metal ion binding"/>
    <property type="evidence" value="ECO:0007669"/>
    <property type="project" value="UniProtKB-KW"/>
</dbReference>
<dbReference type="GO" id="GO:0009098">
    <property type="term" value="P:L-leucine biosynthetic process"/>
    <property type="evidence" value="ECO:0007669"/>
    <property type="project" value="UniProtKB-UniRule"/>
</dbReference>
<dbReference type="CDD" id="cd01583">
    <property type="entry name" value="IPMI"/>
    <property type="match status" value="1"/>
</dbReference>
<dbReference type="Gene3D" id="3.30.499.10">
    <property type="entry name" value="Aconitase, domain 3"/>
    <property type="match status" value="2"/>
</dbReference>
<dbReference type="HAMAP" id="MF_01027">
    <property type="entry name" value="LeuC_type2"/>
    <property type="match status" value="1"/>
</dbReference>
<dbReference type="InterPro" id="IPR015931">
    <property type="entry name" value="Acnase/IPM_dHydase_lsu_aba_1/3"/>
</dbReference>
<dbReference type="InterPro" id="IPR001030">
    <property type="entry name" value="Acoase/IPM_deHydtase_lsu_aba"/>
</dbReference>
<dbReference type="InterPro" id="IPR018136">
    <property type="entry name" value="Aconitase_4Fe-4S_BS"/>
</dbReference>
<dbReference type="InterPro" id="IPR036008">
    <property type="entry name" value="Aconitase_4Fe-4S_dom"/>
</dbReference>
<dbReference type="InterPro" id="IPR011826">
    <property type="entry name" value="HAcnase/IPMdehydase_lsu_prok"/>
</dbReference>
<dbReference type="InterPro" id="IPR006251">
    <property type="entry name" value="Homoacnase/IPMdehydase_lsu"/>
</dbReference>
<dbReference type="InterPro" id="IPR050067">
    <property type="entry name" value="IPM_dehydratase_rel_enz"/>
</dbReference>
<dbReference type="InterPro" id="IPR033941">
    <property type="entry name" value="IPMI_cat"/>
</dbReference>
<dbReference type="InterPro" id="IPR011823">
    <property type="entry name" value="IsopropMal_deHydtase_lsu_bac"/>
</dbReference>
<dbReference type="NCBIfam" id="TIGR01343">
    <property type="entry name" value="hacA_fam"/>
    <property type="match status" value="1"/>
</dbReference>
<dbReference type="NCBIfam" id="TIGR02086">
    <property type="entry name" value="IPMI_arch"/>
    <property type="match status" value="1"/>
</dbReference>
<dbReference type="NCBIfam" id="TIGR02083">
    <property type="entry name" value="LEU2"/>
    <property type="match status" value="1"/>
</dbReference>
<dbReference type="NCBIfam" id="NF001614">
    <property type="entry name" value="PRK00402.1"/>
    <property type="match status" value="1"/>
</dbReference>
<dbReference type="PANTHER" id="PTHR43822:SF16">
    <property type="entry name" value="3-ISOPROPYLMALATE DEHYDRATASE LARGE SUBUNIT 2"/>
    <property type="match status" value="1"/>
</dbReference>
<dbReference type="PANTHER" id="PTHR43822">
    <property type="entry name" value="HOMOACONITASE, MITOCHONDRIAL-RELATED"/>
    <property type="match status" value="1"/>
</dbReference>
<dbReference type="Pfam" id="PF00330">
    <property type="entry name" value="Aconitase"/>
    <property type="match status" value="2"/>
</dbReference>
<dbReference type="PRINTS" id="PR00415">
    <property type="entry name" value="ACONITASE"/>
</dbReference>
<dbReference type="SUPFAM" id="SSF53732">
    <property type="entry name" value="Aconitase iron-sulfur domain"/>
    <property type="match status" value="1"/>
</dbReference>
<dbReference type="PROSITE" id="PS00450">
    <property type="entry name" value="ACONITASE_1"/>
    <property type="match status" value="1"/>
</dbReference>
<dbReference type="PROSITE" id="PS01244">
    <property type="entry name" value="ACONITASE_2"/>
    <property type="match status" value="1"/>
</dbReference>
<sequence>MAHTLAQKILQAHTDEAITAAGQIVRCRVSLALANDITAPLAIKSFRAMGAKKVFDRDKVALVMDHFTPQKDIASAQQVKLTREFAREMGVTHYYEGGDCGVEHALLPELGLVGPGDVVVGADSHTCTYGGLGAFATGFGSTDVAGAMALGETWFKVPPTIRATFTGTLPKWVGAKDLILRLIGEIGVDGALYRALEFDGAAIEALSVEGRMTIANMAIEAGGKAGLFAADAKTLAYTAARGRKDAPLSADPGATYERELTFDVSGMEPLVACPHLPENVKPVGEVRGVTLDQVVIGSCTNGRISDMREAAEVLKGRKVAKGVRCIVLPATPGVWKEALKEGLIETFMESGCIVGPATCGPCLGGHMGILADGERAIATTNRNFRGRMGSLESEVYLASPAVAAASAVAGIIAHPGSL</sequence>
<keyword id="KW-0004">4Fe-4S</keyword>
<keyword id="KW-0028">Amino-acid biosynthesis</keyword>
<keyword id="KW-0100">Branched-chain amino acid biosynthesis</keyword>
<keyword id="KW-0408">Iron</keyword>
<keyword id="KW-0411">Iron-sulfur</keyword>
<keyword id="KW-0432">Leucine biosynthesis</keyword>
<keyword id="KW-0456">Lyase</keyword>
<keyword id="KW-0479">Metal-binding</keyword>
<protein>
    <recommendedName>
        <fullName evidence="1">3-isopropylmalate dehydratase large subunit</fullName>
        <ecNumber evidence="1">4.2.1.33</ecNumber>
    </recommendedName>
    <alternativeName>
        <fullName evidence="1">Alpha-IPM isomerase</fullName>
        <shortName evidence="1">IPMI</shortName>
    </alternativeName>
    <alternativeName>
        <fullName evidence="1">Isopropylmalate isomerase</fullName>
    </alternativeName>
</protein>
<accession>B8DM92</accession>
<evidence type="ECO:0000255" key="1">
    <source>
        <dbReference type="HAMAP-Rule" id="MF_01027"/>
    </source>
</evidence>
<organism>
    <name type="scientific">Nitratidesulfovibrio vulgaris (strain DSM 19637 / Miyazaki F)</name>
    <name type="common">Desulfovibrio vulgaris</name>
    <dbReference type="NCBI Taxonomy" id="883"/>
    <lineage>
        <taxon>Bacteria</taxon>
        <taxon>Pseudomonadati</taxon>
        <taxon>Thermodesulfobacteriota</taxon>
        <taxon>Desulfovibrionia</taxon>
        <taxon>Desulfovibrionales</taxon>
        <taxon>Desulfovibrionaceae</taxon>
        <taxon>Nitratidesulfovibrio</taxon>
    </lineage>
</organism>
<gene>
    <name evidence="1" type="primary">leuC</name>
    <name type="ordered locus">DvMF_1792</name>
</gene>